<organism>
    <name type="scientific">Methanosarcina mazei (strain ATCC BAA-159 / DSM 3647 / Goe1 / Go1 / JCM 11833 / OCM 88)</name>
    <name type="common">Methanosarcina frisia</name>
    <dbReference type="NCBI Taxonomy" id="192952"/>
    <lineage>
        <taxon>Archaea</taxon>
        <taxon>Methanobacteriati</taxon>
        <taxon>Methanobacteriota</taxon>
        <taxon>Stenosarchaea group</taxon>
        <taxon>Methanomicrobia</taxon>
        <taxon>Methanosarcinales</taxon>
        <taxon>Methanosarcinaceae</taxon>
        <taxon>Methanosarcina</taxon>
    </lineage>
</organism>
<protein>
    <recommendedName>
        <fullName evidence="2">Glyceraldehyde-3-phosphate dehydrogenase</fullName>
        <shortName evidence="2">GAPDH</shortName>
        <ecNumber evidence="2">1.2.1.59</ecNumber>
    </recommendedName>
    <alternativeName>
        <fullName evidence="2">NAD(P)-dependent glyceraldehyde-3-phosphate dehydrogenase</fullName>
    </alternativeName>
</protein>
<sequence length="335" mass="36611">MVKAKIAVNGYGTIGKRVADAVQAQDDMEIIGVSKTKPNYEAAVAHQKGYDLFAPASNSGAFEKAGIPLAGTIEEMVEKADLVVDCTPGGIGEANKPMYEKAGVKAIWQGGEDHELAGFSFNAASNYEGALGRDLVRVVSCNTTGLCRVIYPIDRELGVKKVRVTLARRATDPNDIKKGPINAIVPDPIKLPSHHGPDIKSVLPHINITTAALKIPTTLMHLHTVNMEVNTDCTAEDINRIFSSQSRIRFMSQGINSTAEIIELARDMGRPRNDMWENCIWPESITVHEREFYFFQAIHQESIVVPETVDAIRAMMELESDGAKSIQKTNKAIGL</sequence>
<evidence type="ECO:0000250" key="1"/>
<evidence type="ECO:0000255" key="2">
    <source>
        <dbReference type="HAMAP-Rule" id="MF_00559"/>
    </source>
</evidence>
<gene>
    <name evidence="2" type="primary">gap</name>
    <name type="ordered locus">MM_2782</name>
</gene>
<name>G3P_METMA</name>
<feature type="chain" id="PRO_0000145725" description="Glyceraldehyde-3-phosphate dehydrogenase">
    <location>
        <begin position="1"/>
        <end position="335"/>
    </location>
</feature>
<feature type="active site" description="Nucleophile" evidence="2">
    <location>
        <position position="141"/>
    </location>
</feature>
<feature type="binding site" evidence="2">
    <location>
        <begin position="13"/>
        <end position="14"/>
    </location>
    <ligand>
        <name>NAD(+)</name>
        <dbReference type="ChEBI" id="CHEBI:57540"/>
    </ligand>
</feature>
<feature type="binding site" evidence="2">
    <location>
        <position position="111"/>
    </location>
    <ligand>
        <name>NAD(+)</name>
        <dbReference type="ChEBI" id="CHEBI:57540"/>
    </ligand>
</feature>
<feature type="binding site" evidence="2">
    <location>
        <begin position="140"/>
        <end position="142"/>
    </location>
    <ligand>
        <name>D-glyceraldehyde 3-phosphate</name>
        <dbReference type="ChEBI" id="CHEBI:59776"/>
    </ligand>
</feature>
<feature type="binding site" evidence="2">
    <location>
        <position position="169"/>
    </location>
    <ligand>
        <name>NAD(+)</name>
        <dbReference type="ChEBI" id="CHEBI:57540"/>
    </ligand>
</feature>
<feature type="binding site" evidence="1">
    <location>
        <position position="171"/>
    </location>
    <ligand>
        <name>D-glyceraldehyde 3-phosphate</name>
        <dbReference type="ChEBI" id="CHEBI:59776"/>
    </ligand>
</feature>
<feature type="binding site" evidence="2">
    <location>
        <begin position="195"/>
        <end position="196"/>
    </location>
    <ligand>
        <name>D-glyceraldehyde 3-phosphate</name>
        <dbReference type="ChEBI" id="CHEBI:59776"/>
    </ligand>
</feature>
<feature type="binding site" evidence="2">
    <location>
        <position position="300"/>
    </location>
    <ligand>
        <name>NAD(+)</name>
        <dbReference type="ChEBI" id="CHEBI:57540"/>
    </ligand>
</feature>
<accession>Q8PTD3</accession>
<reference key="1">
    <citation type="journal article" date="2002" name="J. Mol. Microbiol. Biotechnol.">
        <title>The genome of Methanosarcina mazei: evidence for lateral gene transfer between Bacteria and Archaea.</title>
        <authorList>
            <person name="Deppenmeier U."/>
            <person name="Johann A."/>
            <person name="Hartsch T."/>
            <person name="Merkl R."/>
            <person name="Schmitz R.A."/>
            <person name="Martinez-Arias R."/>
            <person name="Henne A."/>
            <person name="Wiezer A."/>
            <person name="Baeumer S."/>
            <person name="Jacobi C."/>
            <person name="Brueggemann H."/>
            <person name="Lienard T."/>
            <person name="Christmann A."/>
            <person name="Boemecke M."/>
            <person name="Steckel S."/>
            <person name="Bhattacharyya A."/>
            <person name="Lykidis A."/>
            <person name="Overbeek R."/>
            <person name="Klenk H.-P."/>
            <person name="Gunsalus R.P."/>
            <person name="Fritz H.-J."/>
            <person name="Gottschalk G."/>
        </authorList>
    </citation>
    <scope>NUCLEOTIDE SEQUENCE [LARGE SCALE GENOMIC DNA]</scope>
    <source>
        <strain>ATCC BAA-159 / DSM 3647 / Goe1 / Go1 / JCM 11833 / OCM 88</strain>
    </source>
</reference>
<comment type="catalytic activity">
    <reaction evidence="2">
        <text>D-glyceraldehyde 3-phosphate + phosphate + NADP(+) = (2R)-3-phospho-glyceroyl phosphate + NADPH + H(+)</text>
        <dbReference type="Rhea" id="RHEA:10296"/>
        <dbReference type="ChEBI" id="CHEBI:15378"/>
        <dbReference type="ChEBI" id="CHEBI:43474"/>
        <dbReference type="ChEBI" id="CHEBI:57604"/>
        <dbReference type="ChEBI" id="CHEBI:57783"/>
        <dbReference type="ChEBI" id="CHEBI:58349"/>
        <dbReference type="ChEBI" id="CHEBI:59776"/>
        <dbReference type="EC" id="1.2.1.59"/>
    </reaction>
</comment>
<comment type="catalytic activity">
    <reaction evidence="2">
        <text>D-glyceraldehyde 3-phosphate + phosphate + NAD(+) = (2R)-3-phospho-glyceroyl phosphate + NADH + H(+)</text>
        <dbReference type="Rhea" id="RHEA:10300"/>
        <dbReference type="ChEBI" id="CHEBI:15378"/>
        <dbReference type="ChEBI" id="CHEBI:43474"/>
        <dbReference type="ChEBI" id="CHEBI:57540"/>
        <dbReference type="ChEBI" id="CHEBI:57604"/>
        <dbReference type="ChEBI" id="CHEBI:57945"/>
        <dbReference type="ChEBI" id="CHEBI:59776"/>
        <dbReference type="EC" id="1.2.1.59"/>
    </reaction>
</comment>
<comment type="pathway">
    <text evidence="2">Carbohydrate degradation; glycolysis; pyruvate from D-glyceraldehyde 3-phosphate: step 1/5.</text>
</comment>
<comment type="subunit">
    <text evidence="2">Homotetramer.</text>
</comment>
<comment type="subcellular location">
    <subcellularLocation>
        <location evidence="2">Cytoplasm</location>
    </subcellularLocation>
</comment>
<comment type="similarity">
    <text evidence="2">Belongs to the glyceraldehyde-3-phosphate dehydrogenase family.</text>
</comment>
<dbReference type="EC" id="1.2.1.59" evidence="2"/>
<dbReference type="EMBL" id="AE008384">
    <property type="protein sequence ID" value="AAM32478.1"/>
    <property type="molecule type" value="Genomic_DNA"/>
</dbReference>
<dbReference type="RefSeq" id="WP_011034691.1">
    <property type="nucleotide sequence ID" value="NC_003901.1"/>
</dbReference>
<dbReference type="SMR" id="Q8PTD3"/>
<dbReference type="KEGG" id="mma:MM_2782"/>
<dbReference type="PATRIC" id="fig|192952.21.peg.3209"/>
<dbReference type="eggNOG" id="arCOG00493">
    <property type="taxonomic scope" value="Archaea"/>
</dbReference>
<dbReference type="HOGENOM" id="CLU_069533_0_0_2"/>
<dbReference type="UniPathway" id="UPA00109">
    <property type="reaction ID" value="UER00184"/>
</dbReference>
<dbReference type="Proteomes" id="UP000000595">
    <property type="component" value="Chromosome"/>
</dbReference>
<dbReference type="GO" id="GO:0005737">
    <property type="term" value="C:cytoplasm"/>
    <property type="evidence" value="ECO:0007669"/>
    <property type="project" value="UniProtKB-SubCell"/>
</dbReference>
<dbReference type="GO" id="GO:0008839">
    <property type="term" value="F:4-hydroxy-tetrahydrodipicolinate reductase"/>
    <property type="evidence" value="ECO:0007669"/>
    <property type="project" value="InterPro"/>
</dbReference>
<dbReference type="GO" id="GO:0004365">
    <property type="term" value="F:glyceraldehyde-3-phosphate dehydrogenase (NAD+) (phosphorylating) activity"/>
    <property type="evidence" value="ECO:0007669"/>
    <property type="project" value="UniProtKB-UniRule"/>
</dbReference>
<dbReference type="GO" id="GO:0047100">
    <property type="term" value="F:glyceraldehyde-3-phosphate dehydrogenase (NADP+) (phosphorylating) activity"/>
    <property type="evidence" value="ECO:0007669"/>
    <property type="project" value="RHEA"/>
</dbReference>
<dbReference type="GO" id="GO:0051287">
    <property type="term" value="F:NAD binding"/>
    <property type="evidence" value="ECO:0007669"/>
    <property type="project" value="InterPro"/>
</dbReference>
<dbReference type="GO" id="GO:0050661">
    <property type="term" value="F:NADP binding"/>
    <property type="evidence" value="ECO:0007669"/>
    <property type="project" value="InterPro"/>
</dbReference>
<dbReference type="GO" id="GO:0006096">
    <property type="term" value="P:glycolytic process"/>
    <property type="evidence" value="ECO:0007669"/>
    <property type="project" value="UniProtKB-UniRule"/>
</dbReference>
<dbReference type="GO" id="GO:0009089">
    <property type="term" value="P:lysine biosynthetic process via diaminopimelate"/>
    <property type="evidence" value="ECO:0007669"/>
    <property type="project" value="InterPro"/>
</dbReference>
<dbReference type="CDD" id="cd18127">
    <property type="entry name" value="GAPDH_II_C"/>
    <property type="match status" value="1"/>
</dbReference>
<dbReference type="CDD" id="cd02278">
    <property type="entry name" value="GAPDH_II_N"/>
    <property type="match status" value="1"/>
</dbReference>
<dbReference type="Gene3D" id="3.30.360.10">
    <property type="entry name" value="Dihydrodipicolinate Reductase, domain 2"/>
    <property type="match status" value="1"/>
</dbReference>
<dbReference type="Gene3D" id="3.40.50.720">
    <property type="entry name" value="NAD(P)-binding Rossmann-like Domain"/>
    <property type="match status" value="1"/>
</dbReference>
<dbReference type="HAMAP" id="MF_00559">
    <property type="entry name" value="G3P_dehdrog_arch"/>
    <property type="match status" value="1"/>
</dbReference>
<dbReference type="InterPro" id="IPR000846">
    <property type="entry name" value="DapB_N"/>
</dbReference>
<dbReference type="InterPro" id="IPR020831">
    <property type="entry name" value="GlycerAld/Erythrose_P_DH"/>
</dbReference>
<dbReference type="InterPro" id="IPR020830">
    <property type="entry name" value="GlycerAld_3-P_DH_AS"/>
</dbReference>
<dbReference type="InterPro" id="IPR020829">
    <property type="entry name" value="GlycerAld_3-P_DH_cat"/>
</dbReference>
<dbReference type="InterPro" id="IPR020828">
    <property type="entry name" value="GlycerAld_3-P_DH_NAD(P)-bd"/>
</dbReference>
<dbReference type="InterPro" id="IPR006436">
    <property type="entry name" value="Glyceraldehyde-3-P_DH_2_arc"/>
</dbReference>
<dbReference type="InterPro" id="IPR036291">
    <property type="entry name" value="NAD(P)-bd_dom_sf"/>
</dbReference>
<dbReference type="NCBIfam" id="TIGR01546">
    <property type="entry name" value="GAPDH-II_archae"/>
    <property type="match status" value="1"/>
</dbReference>
<dbReference type="NCBIfam" id="NF003251">
    <property type="entry name" value="PRK04207.1"/>
    <property type="match status" value="1"/>
</dbReference>
<dbReference type="Pfam" id="PF01113">
    <property type="entry name" value="DapB_N"/>
    <property type="match status" value="1"/>
</dbReference>
<dbReference type="Pfam" id="PF02800">
    <property type="entry name" value="Gp_dh_C"/>
    <property type="match status" value="1"/>
</dbReference>
<dbReference type="PIRSF" id="PIRSF000149">
    <property type="entry name" value="GAP_DH"/>
    <property type="match status" value="1"/>
</dbReference>
<dbReference type="SMART" id="SM00846">
    <property type="entry name" value="Gp_dh_N"/>
    <property type="match status" value="1"/>
</dbReference>
<dbReference type="SUPFAM" id="SSF55347">
    <property type="entry name" value="Glyceraldehyde-3-phosphate dehydrogenase-like, C-terminal domain"/>
    <property type="match status" value="1"/>
</dbReference>
<dbReference type="SUPFAM" id="SSF51735">
    <property type="entry name" value="NAD(P)-binding Rossmann-fold domains"/>
    <property type="match status" value="1"/>
</dbReference>
<dbReference type="PROSITE" id="PS00071">
    <property type="entry name" value="GAPDH"/>
    <property type="match status" value="1"/>
</dbReference>
<keyword id="KW-0963">Cytoplasm</keyword>
<keyword id="KW-0324">Glycolysis</keyword>
<keyword id="KW-0520">NAD</keyword>
<keyword id="KW-0521">NADP</keyword>
<keyword id="KW-0560">Oxidoreductase</keyword>
<proteinExistence type="inferred from homology"/>